<protein>
    <recommendedName>
        <fullName evidence="1">Adenylate kinase</fullName>
        <shortName evidence="1">AK</shortName>
        <ecNumber evidence="1">2.7.4.3</ecNumber>
    </recommendedName>
    <alternativeName>
        <fullName evidence="1">ATP-AMP transphosphorylase</fullName>
    </alternativeName>
    <alternativeName>
        <fullName evidence="1">ATP:AMP phosphotransferase</fullName>
    </alternativeName>
    <alternativeName>
        <fullName evidence="1">Adenylate monophosphate kinase</fullName>
    </alternativeName>
</protein>
<gene>
    <name evidence="1" type="primary">adk</name>
    <name type="ordered locus">SeD_A0534</name>
</gene>
<evidence type="ECO:0000255" key="1">
    <source>
        <dbReference type="HAMAP-Rule" id="MF_00235"/>
    </source>
</evidence>
<reference key="1">
    <citation type="journal article" date="2011" name="J. Bacteriol.">
        <title>Comparative genomics of 28 Salmonella enterica isolates: evidence for CRISPR-mediated adaptive sublineage evolution.</title>
        <authorList>
            <person name="Fricke W.F."/>
            <person name="Mammel M.K."/>
            <person name="McDermott P.F."/>
            <person name="Tartera C."/>
            <person name="White D.G."/>
            <person name="Leclerc J.E."/>
            <person name="Ravel J."/>
            <person name="Cebula T.A."/>
        </authorList>
    </citation>
    <scope>NUCLEOTIDE SEQUENCE [LARGE SCALE GENOMIC DNA]</scope>
    <source>
        <strain>CT_02021853</strain>
    </source>
</reference>
<name>KAD_SALDC</name>
<comment type="function">
    <text evidence="1">Catalyzes the reversible transfer of the terminal phosphate group between ATP and AMP. Plays an important role in cellular energy homeostasis and in adenine nucleotide metabolism.</text>
</comment>
<comment type="catalytic activity">
    <reaction evidence="1">
        <text>AMP + ATP = 2 ADP</text>
        <dbReference type="Rhea" id="RHEA:12973"/>
        <dbReference type="ChEBI" id="CHEBI:30616"/>
        <dbReference type="ChEBI" id="CHEBI:456215"/>
        <dbReference type="ChEBI" id="CHEBI:456216"/>
        <dbReference type="EC" id="2.7.4.3"/>
    </reaction>
</comment>
<comment type="pathway">
    <text evidence="1">Purine metabolism; AMP biosynthesis via salvage pathway; AMP from ADP: step 1/1.</text>
</comment>
<comment type="subunit">
    <text evidence="1">Monomer.</text>
</comment>
<comment type="subcellular location">
    <subcellularLocation>
        <location evidence="1">Cytoplasm</location>
    </subcellularLocation>
</comment>
<comment type="domain">
    <text evidence="1">Consists of three domains, a large central CORE domain and two small peripheral domains, NMPbind and LID, which undergo movements during catalysis. The LID domain closes over the site of phosphoryl transfer upon ATP binding. Assembling and dissambling the active center during each catalytic cycle provides an effective means to prevent ATP hydrolysis.</text>
</comment>
<comment type="similarity">
    <text evidence="1">Belongs to the adenylate kinase family.</text>
</comment>
<dbReference type="EC" id="2.7.4.3" evidence="1"/>
<dbReference type="EMBL" id="CP001144">
    <property type="protein sequence ID" value="ACH77420.1"/>
    <property type="molecule type" value="Genomic_DNA"/>
</dbReference>
<dbReference type="RefSeq" id="WP_001220237.1">
    <property type="nucleotide sequence ID" value="NC_011205.1"/>
</dbReference>
<dbReference type="SMR" id="B5FLJ7"/>
<dbReference type="KEGG" id="sed:SeD_A0534"/>
<dbReference type="HOGENOM" id="CLU_032354_1_2_6"/>
<dbReference type="UniPathway" id="UPA00588">
    <property type="reaction ID" value="UER00649"/>
</dbReference>
<dbReference type="Proteomes" id="UP000008322">
    <property type="component" value="Chromosome"/>
</dbReference>
<dbReference type="GO" id="GO:0005737">
    <property type="term" value="C:cytoplasm"/>
    <property type="evidence" value="ECO:0007669"/>
    <property type="project" value="UniProtKB-SubCell"/>
</dbReference>
<dbReference type="GO" id="GO:0004017">
    <property type="term" value="F:adenylate kinase activity"/>
    <property type="evidence" value="ECO:0007669"/>
    <property type="project" value="UniProtKB-UniRule"/>
</dbReference>
<dbReference type="GO" id="GO:0005524">
    <property type="term" value="F:ATP binding"/>
    <property type="evidence" value="ECO:0007669"/>
    <property type="project" value="UniProtKB-UniRule"/>
</dbReference>
<dbReference type="GO" id="GO:0044209">
    <property type="term" value="P:AMP salvage"/>
    <property type="evidence" value="ECO:0007669"/>
    <property type="project" value="UniProtKB-UniRule"/>
</dbReference>
<dbReference type="CDD" id="cd01428">
    <property type="entry name" value="ADK"/>
    <property type="match status" value="1"/>
</dbReference>
<dbReference type="FunFam" id="3.40.50.300:FF:000106">
    <property type="entry name" value="Adenylate kinase mitochondrial"/>
    <property type="match status" value="1"/>
</dbReference>
<dbReference type="Gene3D" id="3.40.50.300">
    <property type="entry name" value="P-loop containing nucleotide triphosphate hydrolases"/>
    <property type="match status" value="1"/>
</dbReference>
<dbReference type="HAMAP" id="MF_00235">
    <property type="entry name" value="Adenylate_kinase_Adk"/>
    <property type="match status" value="1"/>
</dbReference>
<dbReference type="InterPro" id="IPR006259">
    <property type="entry name" value="Adenyl_kin_sub"/>
</dbReference>
<dbReference type="InterPro" id="IPR000850">
    <property type="entry name" value="Adenylat/UMP-CMP_kin"/>
</dbReference>
<dbReference type="InterPro" id="IPR033690">
    <property type="entry name" value="Adenylat_kinase_CS"/>
</dbReference>
<dbReference type="InterPro" id="IPR007862">
    <property type="entry name" value="Adenylate_kinase_lid-dom"/>
</dbReference>
<dbReference type="InterPro" id="IPR027417">
    <property type="entry name" value="P-loop_NTPase"/>
</dbReference>
<dbReference type="NCBIfam" id="TIGR01351">
    <property type="entry name" value="adk"/>
    <property type="match status" value="1"/>
</dbReference>
<dbReference type="NCBIfam" id="NF001379">
    <property type="entry name" value="PRK00279.1-1"/>
    <property type="match status" value="1"/>
</dbReference>
<dbReference type="NCBIfam" id="NF001380">
    <property type="entry name" value="PRK00279.1-2"/>
    <property type="match status" value="1"/>
</dbReference>
<dbReference type="NCBIfam" id="NF001381">
    <property type="entry name" value="PRK00279.1-3"/>
    <property type="match status" value="1"/>
</dbReference>
<dbReference type="NCBIfam" id="NF011100">
    <property type="entry name" value="PRK14527.1"/>
    <property type="match status" value="1"/>
</dbReference>
<dbReference type="PANTHER" id="PTHR23359">
    <property type="entry name" value="NUCLEOTIDE KINASE"/>
    <property type="match status" value="1"/>
</dbReference>
<dbReference type="Pfam" id="PF00406">
    <property type="entry name" value="ADK"/>
    <property type="match status" value="1"/>
</dbReference>
<dbReference type="Pfam" id="PF05191">
    <property type="entry name" value="ADK_lid"/>
    <property type="match status" value="1"/>
</dbReference>
<dbReference type="PRINTS" id="PR00094">
    <property type="entry name" value="ADENYLTKNASE"/>
</dbReference>
<dbReference type="SUPFAM" id="SSF52540">
    <property type="entry name" value="P-loop containing nucleoside triphosphate hydrolases"/>
    <property type="match status" value="1"/>
</dbReference>
<dbReference type="PROSITE" id="PS00113">
    <property type="entry name" value="ADENYLATE_KINASE"/>
    <property type="match status" value="1"/>
</dbReference>
<organism>
    <name type="scientific">Salmonella dublin (strain CT_02021853)</name>
    <dbReference type="NCBI Taxonomy" id="439851"/>
    <lineage>
        <taxon>Bacteria</taxon>
        <taxon>Pseudomonadati</taxon>
        <taxon>Pseudomonadota</taxon>
        <taxon>Gammaproteobacteria</taxon>
        <taxon>Enterobacterales</taxon>
        <taxon>Enterobacteriaceae</taxon>
        <taxon>Salmonella</taxon>
    </lineage>
</organism>
<feature type="chain" id="PRO_1000100601" description="Adenylate kinase">
    <location>
        <begin position="1"/>
        <end position="214"/>
    </location>
</feature>
<feature type="region of interest" description="NMP" evidence="1">
    <location>
        <begin position="30"/>
        <end position="59"/>
    </location>
</feature>
<feature type="region of interest" description="LID">
    <location>
        <begin position="122"/>
        <end position="159"/>
    </location>
</feature>
<feature type="binding site" evidence="1">
    <location>
        <begin position="10"/>
        <end position="15"/>
    </location>
    <ligand>
        <name>ATP</name>
        <dbReference type="ChEBI" id="CHEBI:30616"/>
    </ligand>
</feature>
<feature type="binding site" evidence="1">
    <location>
        <position position="31"/>
    </location>
    <ligand>
        <name>AMP</name>
        <dbReference type="ChEBI" id="CHEBI:456215"/>
    </ligand>
</feature>
<feature type="binding site" evidence="1">
    <location>
        <position position="36"/>
    </location>
    <ligand>
        <name>AMP</name>
        <dbReference type="ChEBI" id="CHEBI:456215"/>
    </ligand>
</feature>
<feature type="binding site" evidence="1">
    <location>
        <begin position="57"/>
        <end position="59"/>
    </location>
    <ligand>
        <name>AMP</name>
        <dbReference type="ChEBI" id="CHEBI:456215"/>
    </ligand>
</feature>
<feature type="binding site" evidence="1">
    <location>
        <begin position="85"/>
        <end position="88"/>
    </location>
    <ligand>
        <name>AMP</name>
        <dbReference type="ChEBI" id="CHEBI:456215"/>
    </ligand>
</feature>
<feature type="binding site" evidence="1">
    <location>
        <position position="92"/>
    </location>
    <ligand>
        <name>AMP</name>
        <dbReference type="ChEBI" id="CHEBI:456215"/>
    </ligand>
</feature>
<feature type="binding site" evidence="1">
    <location>
        <position position="123"/>
    </location>
    <ligand>
        <name>ATP</name>
        <dbReference type="ChEBI" id="CHEBI:30616"/>
    </ligand>
</feature>
<feature type="binding site" evidence="1">
    <location>
        <begin position="132"/>
        <end position="133"/>
    </location>
    <ligand>
        <name>ATP</name>
        <dbReference type="ChEBI" id="CHEBI:30616"/>
    </ligand>
</feature>
<feature type="binding site" evidence="1">
    <location>
        <position position="156"/>
    </location>
    <ligand>
        <name>AMP</name>
        <dbReference type="ChEBI" id="CHEBI:456215"/>
    </ligand>
</feature>
<feature type="binding site" evidence="1">
    <location>
        <position position="167"/>
    </location>
    <ligand>
        <name>AMP</name>
        <dbReference type="ChEBI" id="CHEBI:456215"/>
    </ligand>
</feature>
<feature type="binding site" evidence="1">
    <location>
        <position position="200"/>
    </location>
    <ligand>
        <name>ATP</name>
        <dbReference type="ChEBI" id="CHEBI:30616"/>
    </ligand>
</feature>
<keyword id="KW-0067">ATP-binding</keyword>
<keyword id="KW-0963">Cytoplasm</keyword>
<keyword id="KW-0418">Kinase</keyword>
<keyword id="KW-0545">Nucleotide biosynthesis</keyword>
<keyword id="KW-0547">Nucleotide-binding</keyword>
<keyword id="KW-0808">Transferase</keyword>
<accession>B5FLJ7</accession>
<proteinExistence type="inferred from homology"/>
<sequence>MRIILLGAPGAGKGTQAQFIMEKYGIPQISTGDMLRAAVKSGSELGKQAKDIMDAGKLVTDELVIALVKERIAQEDCRNGFLLDGFPRTIPQADAMKEAGIVVDYVLEFDVPDELIVDRIVGRRVHAASGRVYHVKFNPPKVEGKDDVTGEDLTTRKDDQEETVRKRLVEYHQMTAPLIGYYQKEAEAGNTKYAKVDGTQAVADVRAALEKILG</sequence>